<feature type="chain" id="PRO_1000146924" description="Co-chaperonin GroES">
    <location>
        <begin position="1"/>
        <end position="96"/>
    </location>
</feature>
<evidence type="ECO:0000255" key="1">
    <source>
        <dbReference type="HAMAP-Rule" id="MF_00580"/>
    </source>
</evidence>
<dbReference type="EMBL" id="CP001339">
    <property type="protein sequence ID" value="ACL71536.1"/>
    <property type="molecule type" value="Genomic_DNA"/>
</dbReference>
<dbReference type="RefSeq" id="WP_012637025.1">
    <property type="nucleotide sequence ID" value="NC_011901.1"/>
</dbReference>
<dbReference type="SMR" id="B8GL18"/>
<dbReference type="STRING" id="396588.Tgr7_0438"/>
<dbReference type="KEGG" id="tgr:Tgr7_0438"/>
<dbReference type="eggNOG" id="COG0234">
    <property type="taxonomic scope" value="Bacteria"/>
</dbReference>
<dbReference type="HOGENOM" id="CLU_132825_1_0_6"/>
<dbReference type="OrthoDB" id="9806791at2"/>
<dbReference type="Proteomes" id="UP000002383">
    <property type="component" value="Chromosome"/>
</dbReference>
<dbReference type="GO" id="GO:0005737">
    <property type="term" value="C:cytoplasm"/>
    <property type="evidence" value="ECO:0007669"/>
    <property type="project" value="UniProtKB-SubCell"/>
</dbReference>
<dbReference type="GO" id="GO:0005524">
    <property type="term" value="F:ATP binding"/>
    <property type="evidence" value="ECO:0007669"/>
    <property type="project" value="InterPro"/>
</dbReference>
<dbReference type="GO" id="GO:0046872">
    <property type="term" value="F:metal ion binding"/>
    <property type="evidence" value="ECO:0007669"/>
    <property type="project" value="TreeGrafter"/>
</dbReference>
<dbReference type="GO" id="GO:0044183">
    <property type="term" value="F:protein folding chaperone"/>
    <property type="evidence" value="ECO:0007669"/>
    <property type="project" value="InterPro"/>
</dbReference>
<dbReference type="GO" id="GO:0051087">
    <property type="term" value="F:protein-folding chaperone binding"/>
    <property type="evidence" value="ECO:0007669"/>
    <property type="project" value="TreeGrafter"/>
</dbReference>
<dbReference type="GO" id="GO:0051082">
    <property type="term" value="F:unfolded protein binding"/>
    <property type="evidence" value="ECO:0007669"/>
    <property type="project" value="TreeGrafter"/>
</dbReference>
<dbReference type="GO" id="GO:0051085">
    <property type="term" value="P:chaperone cofactor-dependent protein refolding"/>
    <property type="evidence" value="ECO:0007669"/>
    <property type="project" value="TreeGrafter"/>
</dbReference>
<dbReference type="CDD" id="cd00320">
    <property type="entry name" value="cpn10"/>
    <property type="match status" value="1"/>
</dbReference>
<dbReference type="FunFam" id="2.30.33.40:FF:000001">
    <property type="entry name" value="10 kDa chaperonin"/>
    <property type="match status" value="1"/>
</dbReference>
<dbReference type="Gene3D" id="2.30.33.40">
    <property type="entry name" value="GroES chaperonin"/>
    <property type="match status" value="1"/>
</dbReference>
<dbReference type="HAMAP" id="MF_00580">
    <property type="entry name" value="CH10"/>
    <property type="match status" value="1"/>
</dbReference>
<dbReference type="InterPro" id="IPR020818">
    <property type="entry name" value="Chaperonin_GroES"/>
</dbReference>
<dbReference type="InterPro" id="IPR037124">
    <property type="entry name" value="Chaperonin_GroES_sf"/>
</dbReference>
<dbReference type="InterPro" id="IPR018369">
    <property type="entry name" value="Chaprnonin_Cpn10_CS"/>
</dbReference>
<dbReference type="InterPro" id="IPR011032">
    <property type="entry name" value="GroES-like_sf"/>
</dbReference>
<dbReference type="NCBIfam" id="NF001527">
    <property type="entry name" value="PRK00364.1-2"/>
    <property type="match status" value="1"/>
</dbReference>
<dbReference type="NCBIfam" id="NF001529">
    <property type="entry name" value="PRK00364.1-5"/>
    <property type="match status" value="1"/>
</dbReference>
<dbReference type="NCBIfam" id="NF001531">
    <property type="entry name" value="PRK00364.2-2"/>
    <property type="match status" value="1"/>
</dbReference>
<dbReference type="NCBIfam" id="NF001533">
    <property type="entry name" value="PRK00364.2-4"/>
    <property type="match status" value="1"/>
</dbReference>
<dbReference type="NCBIfam" id="NF001534">
    <property type="entry name" value="PRK00364.2-5"/>
    <property type="match status" value="1"/>
</dbReference>
<dbReference type="PANTHER" id="PTHR10772">
    <property type="entry name" value="10 KDA HEAT SHOCK PROTEIN"/>
    <property type="match status" value="1"/>
</dbReference>
<dbReference type="PANTHER" id="PTHR10772:SF58">
    <property type="entry name" value="CO-CHAPERONIN GROES"/>
    <property type="match status" value="1"/>
</dbReference>
<dbReference type="Pfam" id="PF00166">
    <property type="entry name" value="Cpn10"/>
    <property type="match status" value="1"/>
</dbReference>
<dbReference type="PRINTS" id="PR00297">
    <property type="entry name" value="CHAPERONIN10"/>
</dbReference>
<dbReference type="SMART" id="SM00883">
    <property type="entry name" value="Cpn10"/>
    <property type="match status" value="1"/>
</dbReference>
<dbReference type="SUPFAM" id="SSF50129">
    <property type="entry name" value="GroES-like"/>
    <property type="match status" value="1"/>
</dbReference>
<dbReference type="PROSITE" id="PS00681">
    <property type="entry name" value="CHAPERONINS_CPN10"/>
    <property type="match status" value="1"/>
</dbReference>
<comment type="function">
    <text evidence="1">Together with the chaperonin GroEL, plays an essential role in assisting protein folding. The GroEL-GroES system forms a nano-cage that allows encapsulation of the non-native substrate proteins and provides a physical environment optimized to promote and accelerate protein folding. GroES binds to the apical surface of the GroEL ring, thereby capping the opening of the GroEL channel.</text>
</comment>
<comment type="subunit">
    <text evidence="1">Heptamer of 7 subunits arranged in a ring. Interacts with the chaperonin GroEL.</text>
</comment>
<comment type="subcellular location">
    <subcellularLocation>
        <location evidence="1">Cytoplasm</location>
    </subcellularLocation>
</comment>
<comment type="similarity">
    <text evidence="1">Belongs to the GroES chaperonin family.</text>
</comment>
<reference key="1">
    <citation type="journal article" date="2011" name="Stand. Genomic Sci.">
        <title>Complete genome sequence of 'Thioalkalivibrio sulfidophilus' HL-EbGr7.</title>
        <authorList>
            <person name="Muyzer G."/>
            <person name="Sorokin D.Y."/>
            <person name="Mavromatis K."/>
            <person name="Lapidus A."/>
            <person name="Clum A."/>
            <person name="Ivanova N."/>
            <person name="Pati A."/>
            <person name="d'Haeseleer P."/>
            <person name="Woyke T."/>
            <person name="Kyrpides N.C."/>
        </authorList>
    </citation>
    <scope>NUCLEOTIDE SEQUENCE [LARGE SCALE GENOMIC DNA]</scope>
    <source>
        <strain>HL-EbGR7</strain>
    </source>
</reference>
<keyword id="KW-0143">Chaperone</keyword>
<keyword id="KW-0963">Cytoplasm</keyword>
<keyword id="KW-1185">Reference proteome</keyword>
<gene>
    <name evidence="1" type="primary">groES</name>
    <name evidence="1" type="synonym">groS</name>
    <name type="ordered locus">Tgr7_0438</name>
</gene>
<proteinExistence type="inferred from homology"/>
<name>CH10_THISH</name>
<organism>
    <name type="scientific">Thioalkalivibrio sulfidiphilus (strain HL-EbGR7)</name>
    <dbReference type="NCBI Taxonomy" id="396588"/>
    <lineage>
        <taxon>Bacteria</taxon>
        <taxon>Pseudomonadati</taxon>
        <taxon>Pseudomonadota</taxon>
        <taxon>Gammaproteobacteria</taxon>
        <taxon>Chromatiales</taxon>
        <taxon>Ectothiorhodospiraceae</taxon>
        <taxon>Thioalkalivibrio</taxon>
    </lineage>
</organism>
<accession>B8GL18</accession>
<protein>
    <recommendedName>
        <fullName evidence="1">Co-chaperonin GroES</fullName>
    </recommendedName>
    <alternativeName>
        <fullName evidence="1">10 kDa chaperonin</fullName>
    </alternativeName>
    <alternativeName>
        <fullName evidence="1">Chaperonin-10</fullName>
        <shortName evidence="1">Cpn10</shortName>
    </alternativeName>
</protein>
<sequence length="96" mass="10530">MNIRPLHDRVIIKRMEEERTTAGGIVIPDSATEKPVRGEVIAVGKGKILENGEVRALDVKVGDKVLFGKYSGTEIKVDGQEVLVMREEDIMGVLEG</sequence>